<keyword id="KW-0028">Amino-acid biosynthesis</keyword>
<keyword id="KW-0457">Lysine biosynthesis</keyword>
<keyword id="KW-0460">Magnesium</keyword>
<keyword id="KW-0464">Manganese</keyword>
<keyword id="KW-0479">Metal-binding</keyword>
<keyword id="KW-0496">Mitochondrion</keyword>
<keyword id="KW-1185">Reference proteome</keyword>
<keyword id="KW-0808">Transferase</keyword>
<keyword id="KW-0809">Transit peptide</keyword>
<name>HOSM_YARLI</name>
<feature type="transit peptide" description="Mitochondrion" evidence="2">
    <location>
        <begin position="1"/>
        <end status="unknown"/>
    </location>
</feature>
<feature type="chain" id="PRO_0000001050" description="Homocitrate synthase, mitochondrial">
    <location>
        <begin status="unknown"/>
        <end position="446"/>
    </location>
</feature>
<feature type="domain" description="Pyruvate carboxyltransferase" evidence="3">
    <location>
        <begin position="48"/>
        <end position="307"/>
    </location>
</feature>
<feature type="region of interest" description="Disordered" evidence="4">
    <location>
        <begin position="1"/>
        <end position="36"/>
    </location>
</feature>
<feature type="region of interest" description="Disordered" evidence="4">
    <location>
        <begin position="422"/>
        <end position="446"/>
    </location>
</feature>
<feature type="compositionally biased region" description="Low complexity" evidence="4">
    <location>
        <begin position="1"/>
        <end position="14"/>
    </location>
</feature>
<feature type="compositionally biased region" description="Basic and acidic residues" evidence="4">
    <location>
        <begin position="437"/>
        <end position="446"/>
    </location>
</feature>
<feature type="active site" description="Proton acceptor" evidence="1">
    <location>
        <position position="334"/>
    </location>
</feature>
<feature type="binding site" evidence="1">
    <location>
        <position position="56"/>
    </location>
    <ligand>
        <name>2-oxoglutarate</name>
        <dbReference type="ChEBI" id="CHEBI:16810"/>
    </ligand>
</feature>
<feature type="binding site" evidence="1">
    <location>
        <position position="57"/>
    </location>
    <ligand>
        <name>Mg(2+)</name>
        <dbReference type="ChEBI" id="CHEBI:18420"/>
    </ligand>
</feature>
<feature type="binding site" evidence="1">
    <location>
        <position position="116"/>
    </location>
    <ligand>
        <name>2-oxoglutarate</name>
        <dbReference type="ChEBI" id="CHEBI:16810"/>
    </ligand>
</feature>
<feature type="binding site" evidence="1">
    <location>
        <position position="176"/>
    </location>
    <ligand>
        <name>2-oxoglutarate</name>
        <dbReference type="ChEBI" id="CHEBI:16810"/>
    </ligand>
</feature>
<feature type="binding site" evidence="1">
    <location>
        <position position="210"/>
    </location>
    <ligand>
        <name>2-oxoglutarate</name>
        <dbReference type="ChEBI" id="CHEBI:16810"/>
    </ligand>
</feature>
<feature type="binding site" evidence="1">
    <location>
        <position position="237"/>
    </location>
    <ligand>
        <name>Mg(2+)</name>
        <dbReference type="ChEBI" id="CHEBI:18420"/>
    </ligand>
</feature>
<feature type="binding site" evidence="1">
    <location>
        <position position="239"/>
    </location>
    <ligand>
        <name>Mg(2+)</name>
        <dbReference type="ChEBI" id="CHEBI:18420"/>
    </ligand>
</feature>
<sequence length="446" mass="48437">MCATDNAPAANAAPEKPSNVGVEVGHTGEQTNPYGANPADFLSNVSKFQLIESTLREGEQFASAFFDTETKIEIAKALDDFGVDYIELTSPAASEQSRSDCEAICKLGLKAKILTHIRCHMDDARLAVSTGVDGVDVVIGTSQFLRQYSHGKDMNYIAQSAVEVIEFVKSHGIEIRFSSEDSFRSDLVDLLNIYRTVDKIGVNRVGIADTVGCANPRQVYELVRTLKSVVSCDIECHFHNDTGCAIANAYTALEAGANLIDVSVLGIGERNGITSLGGLMARMIAADRDYVLSKYKLHKLRDLENLVADAVQVNIPFNNPITGFCAFTHKAGIHAKAILANPSTYEILNPADFGLTRYIHFANRLTGWNAIKSRVDQLNLHLTDAQCKDVTAKIKKLGDVRSLNIDDVDSIIREFHADVTSTPTVAATEGPAVEDEPAAKKAKTEE</sequence>
<evidence type="ECO:0000250" key="1">
    <source>
        <dbReference type="UniProtKB" id="O87198"/>
    </source>
</evidence>
<evidence type="ECO:0000255" key="2"/>
<evidence type="ECO:0000255" key="3">
    <source>
        <dbReference type="PROSITE-ProRule" id="PRU01151"/>
    </source>
</evidence>
<evidence type="ECO:0000256" key="4">
    <source>
        <dbReference type="SAM" id="MobiDB-lite"/>
    </source>
</evidence>
<evidence type="ECO:0000305" key="5"/>
<reference key="1">
    <citation type="journal article" date="1996" name="Yeast">
        <title>Cloning and sequencing of the LYS1 gene encoding homocitrate synthase in the yeast Yarrowia lipolytica.</title>
        <authorList>
            <person name="Perez-Campo F."/>
            <person name="Nicaud J.-M."/>
            <person name="Gaillardin C."/>
            <person name="Dominguez A."/>
        </authorList>
    </citation>
    <scope>NUCLEOTIDE SEQUENCE [GENOMIC DNA]</scope>
    <source>
        <strain>ATCC 20460 / W29 / CBS 7504 / IFP29</strain>
    </source>
</reference>
<reference key="2">
    <citation type="journal article" date="2004" name="Nature">
        <title>Genome evolution in yeasts.</title>
        <authorList>
            <person name="Dujon B."/>
            <person name="Sherman D."/>
            <person name="Fischer G."/>
            <person name="Durrens P."/>
            <person name="Casaregola S."/>
            <person name="Lafontaine I."/>
            <person name="de Montigny J."/>
            <person name="Marck C."/>
            <person name="Neuveglise C."/>
            <person name="Talla E."/>
            <person name="Goffard N."/>
            <person name="Frangeul L."/>
            <person name="Aigle M."/>
            <person name="Anthouard V."/>
            <person name="Babour A."/>
            <person name="Barbe V."/>
            <person name="Barnay S."/>
            <person name="Blanchin S."/>
            <person name="Beckerich J.-M."/>
            <person name="Beyne E."/>
            <person name="Bleykasten C."/>
            <person name="Boisrame A."/>
            <person name="Boyer J."/>
            <person name="Cattolico L."/>
            <person name="Confanioleri F."/>
            <person name="de Daruvar A."/>
            <person name="Despons L."/>
            <person name="Fabre E."/>
            <person name="Fairhead C."/>
            <person name="Ferry-Dumazet H."/>
            <person name="Groppi A."/>
            <person name="Hantraye F."/>
            <person name="Hennequin C."/>
            <person name="Jauniaux N."/>
            <person name="Joyet P."/>
            <person name="Kachouri R."/>
            <person name="Kerrest A."/>
            <person name="Koszul R."/>
            <person name="Lemaire M."/>
            <person name="Lesur I."/>
            <person name="Ma L."/>
            <person name="Muller H."/>
            <person name="Nicaud J.-M."/>
            <person name="Nikolski M."/>
            <person name="Oztas S."/>
            <person name="Ozier-Kalogeropoulos O."/>
            <person name="Pellenz S."/>
            <person name="Potier S."/>
            <person name="Richard G.-F."/>
            <person name="Straub M.-L."/>
            <person name="Suleau A."/>
            <person name="Swennen D."/>
            <person name="Tekaia F."/>
            <person name="Wesolowski-Louvel M."/>
            <person name="Westhof E."/>
            <person name="Wirth B."/>
            <person name="Zeniou-Meyer M."/>
            <person name="Zivanovic Y."/>
            <person name="Bolotin-Fukuhara M."/>
            <person name="Thierry A."/>
            <person name="Bouchier C."/>
            <person name="Caudron B."/>
            <person name="Scarpelli C."/>
            <person name="Gaillardin C."/>
            <person name="Weissenbach J."/>
            <person name="Wincker P."/>
            <person name="Souciet J.-L."/>
        </authorList>
    </citation>
    <scope>NUCLEOTIDE SEQUENCE [LARGE SCALE GENOMIC DNA]</scope>
    <source>
        <strain>CLIB 122 / E 150</strain>
    </source>
</reference>
<protein>
    <recommendedName>
        <fullName>Homocitrate synthase, mitochondrial</fullName>
        <shortName>HCS</shortName>
        <ecNumber evidence="1">2.3.3.14</ecNumber>
    </recommendedName>
</protein>
<accession>Q12726</accession>
<organism>
    <name type="scientific">Yarrowia lipolytica (strain CLIB 122 / E 150)</name>
    <name type="common">Yeast</name>
    <name type="synonym">Candida lipolytica</name>
    <dbReference type="NCBI Taxonomy" id="284591"/>
    <lineage>
        <taxon>Eukaryota</taxon>
        <taxon>Fungi</taxon>
        <taxon>Dikarya</taxon>
        <taxon>Ascomycota</taxon>
        <taxon>Saccharomycotina</taxon>
        <taxon>Dipodascomycetes</taxon>
        <taxon>Dipodascales</taxon>
        <taxon>Dipodascales incertae sedis</taxon>
        <taxon>Yarrowia</taxon>
    </lineage>
</organism>
<comment type="function">
    <text evidence="1">Catalyzes the aldol-type condensation of 2-oxoglutarate with acetyl-CoA to yield homocitrate. Carries out the first step of the alpha-aminoadipate (AAA) lysine biosynthesis pathway.</text>
</comment>
<comment type="catalytic activity">
    <reaction evidence="1">
        <text>acetyl-CoA + 2-oxoglutarate + H2O = (2R)-homocitrate + CoA + H(+)</text>
        <dbReference type="Rhea" id="RHEA:12929"/>
        <dbReference type="ChEBI" id="CHEBI:15377"/>
        <dbReference type="ChEBI" id="CHEBI:15378"/>
        <dbReference type="ChEBI" id="CHEBI:16810"/>
        <dbReference type="ChEBI" id="CHEBI:57287"/>
        <dbReference type="ChEBI" id="CHEBI:57288"/>
        <dbReference type="ChEBI" id="CHEBI:58884"/>
        <dbReference type="EC" id="2.3.3.14"/>
    </reaction>
    <physiologicalReaction direction="left-to-right" evidence="1">
        <dbReference type="Rhea" id="RHEA:12930"/>
    </physiologicalReaction>
</comment>
<comment type="cofactor">
    <cofactor evidence="1">
        <name>Mg(2+)</name>
        <dbReference type="ChEBI" id="CHEBI:18420"/>
    </cofactor>
    <cofactor evidence="1">
        <name>Mn(2+)</name>
        <dbReference type="ChEBI" id="CHEBI:29035"/>
    </cofactor>
</comment>
<comment type="pathway">
    <text evidence="1">Amino-acid biosynthesis; L-lysine biosynthesis via AAA pathway; L-alpha-aminoadipate from 2-oxoglutarate: step 1/5.</text>
</comment>
<comment type="subcellular location">
    <subcellularLocation>
        <location>Mitochondrion</location>
    </subcellularLocation>
</comment>
<comment type="similarity">
    <text evidence="5">Belongs to the alpha-IPM synthase/homocitrate synthase family. Homocitrate synthase LYS20/LYS21 subfamily.</text>
</comment>
<gene>
    <name type="primary">LYS1</name>
    <name type="ordered locus">YALI0F31075g</name>
</gene>
<dbReference type="EC" id="2.3.3.14" evidence="1"/>
<dbReference type="EMBL" id="Z49114">
    <property type="protein sequence ID" value="CAA88928.1"/>
    <property type="molecule type" value="Genomic_DNA"/>
</dbReference>
<dbReference type="EMBL" id="CR382132">
    <property type="protein sequence ID" value="CAG78892.1"/>
    <property type="molecule type" value="Genomic_DNA"/>
</dbReference>
<dbReference type="RefSeq" id="XP_506079.1">
    <property type="nucleotide sequence ID" value="XM_506079.1"/>
</dbReference>
<dbReference type="SMR" id="Q12726"/>
<dbReference type="FunCoup" id="Q12726">
    <property type="interactions" value="704"/>
</dbReference>
<dbReference type="STRING" id="284591.Q12726"/>
<dbReference type="EnsemblFungi" id="CAG78892">
    <property type="protein sequence ID" value="CAG78892"/>
    <property type="gene ID" value="YALI0_F31075g"/>
</dbReference>
<dbReference type="KEGG" id="yli:2907696"/>
<dbReference type="VEuPathDB" id="FungiDB:YALI0_F31075g"/>
<dbReference type="HOGENOM" id="CLU_022158_2_2_1"/>
<dbReference type="InParanoid" id="Q12726"/>
<dbReference type="OMA" id="NTMRMLV"/>
<dbReference type="OrthoDB" id="14743at4891"/>
<dbReference type="UniPathway" id="UPA00033">
    <property type="reaction ID" value="UER00028"/>
</dbReference>
<dbReference type="Proteomes" id="UP000001300">
    <property type="component" value="Chromosome F"/>
</dbReference>
<dbReference type="GO" id="GO:0005739">
    <property type="term" value="C:mitochondrion"/>
    <property type="evidence" value="ECO:0007669"/>
    <property type="project" value="UniProtKB-SubCell"/>
</dbReference>
<dbReference type="GO" id="GO:0004410">
    <property type="term" value="F:homocitrate synthase activity"/>
    <property type="evidence" value="ECO:0000318"/>
    <property type="project" value="GO_Central"/>
</dbReference>
<dbReference type="GO" id="GO:0046872">
    <property type="term" value="F:metal ion binding"/>
    <property type="evidence" value="ECO:0007669"/>
    <property type="project" value="UniProtKB-KW"/>
</dbReference>
<dbReference type="GO" id="GO:0019878">
    <property type="term" value="P:lysine biosynthetic process via aminoadipic acid"/>
    <property type="evidence" value="ECO:0000318"/>
    <property type="project" value="GO_Central"/>
</dbReference>
<dbReference type="CDD" id="cd07948">
    <property type="entry name" value="DRE_TIM_HCS"/>
    <property type="match status" value="1"/>
</dbReference>
<dbReference type="FunFam" id="1.10.238.260:FF:000002">
    <property type="entry name" value="Homocitrate synthase, mitochondrial"/>
    <property type="match status" value="1"/>
</dbReference>
<dbReference type="FunFam" id="3.20.20.70:FF:000032">
    <property type="entry name" value="Homocitrate synthase, mitochondrial"/>
    <property type="match status" value="1"/>
</dbReference>
<dbReference type="Gene3D" id="1.10.238.260">
    <property type="match status" value="1"/>
</dbReference>
<dbReference type="Gene3D" id="3.20.20.70">
    <property type="entry name" value="Aldolase class I"/>
    <property type="match status" value="1"/>
</dbReference>
<dbReference type="HAMAP" id="MF_02222">
    <property type="entry name" value="Homocitr_synth_fung_arch"/>
    <property type="match status" value="1"/>
</dbReference>
<dbReference type="InterPro" id="IPR050073">
    <property type="entry name" value="2-IPM_HCS-like"/>
</dbReference>
<dbReference type="InterPro" id="IPR002034">
    <property type="entry name" value="AIPM/Hcit_synth_CS"/>
</dbReference>
<dbReference type="InterPro" id="IPR013785">
    <property type="entry name" value="Aldolase_TIM"/>
</dbReference>
<dbReference type="InterPro" id="IPR048253">
    <property type="entry name" value="DRE_TIM_HCS_fun_bact"/>
</dbReference>
<dbReference type="InterPro" id="IPR011872">
    <property type="entry name" value="Homocitrate_synth"/>
</dbReference>
<dbReference type="InterPro" id="IPR054691">
    <property type="entry name" value="LeuA/HCS_post-cat"/>
</dbReference>
<dbReference type="InterPro" id="IPR000891">
    <property type="entry name" value="PYR_CT"/>
</dbReference>
<dbReference type="NCBIfam" id="TIGR02146">
    <property type="entry name" value="LysS_fung_arch"/>
    <property type="match status" value="1"/>
</dbReference>
<dbReference type="PANTHER" id="PTHR10277:SF48">
    <property type="entry name" value="HOMOCITRATE SYNTHASE, CYTOSOLIC ISOZYME-RELATED"/>
    <property type="match status" value="1"/>
</dbReference>
<dbReference type="PANTHER" id="PTHR10277">
    <property type="entry name" value="HOMOCITRATE SYNTHASE-RELATED"/>
    <property type="match status" value="1"/>
</dbReference>
<dbReference type="Pfam" id="PF22617">
    <property type="entry name" value="HCS_D2"/>
    <property type="match status" value="1"/>
</dbReference>
<dbReference type="Pfam" id="PF00682">
    <property type="entry name" value="HMGL-like"/>
    <property type="match status" value="1"/>
</dbReference>
<dbReference type="SUPFAM" id="SSF51569">
    <property type="entry name" value="Aldolase"/>
    <property type="match status" value="1"/>
</dbReference>
<dbReference type="PROSITE" id="PS00815">
    <property type="entry name" value="AIPM_HOMOCIT_SYNTH_1"/>
    <property type="match status" value="1"/>
</dbReference>
<dbReference type="PROSITE" id="PS00816">
    <property type="entry name" value="AIPM_HOMOCIT_SYNTH_2"/>
    <property type="match status" value="1"/>
</dbReference>
<dbReference type="PROSITE" id="PS50991">
    <property type="entry name" value="PYR_CT"/>
    <property type="match status" value="1"/>
</dbReference>
<proteinExistence type="inferred from homology"/>